<reference key="1">
    <citation type="journal article" date="2001" name="J. Bacteriol.">
        <title>Genome of the bacterium Streptococcus pneumoniae strain R6.</title>
        <authorList>
            <person name="Hoskins J."/>
            <person name="Alborn W.E. Jr."/>
            <person name="Arnold J."/>
            <person name="Blaszczak L.C."/>
            <person name="Burgett S."/>
            <person name="DeHoff B.S."/>
            <person name="Estrem S.T."/>
            <person name="Fritz L."/>
            <person name="Fu D.-J."/>
            <person name="Fuller W."/>
            <person name="Geringer C."/>
            <person name="Gilmour R."/>
            <person name="Glass J.S."/>
            <person name="Khoja H."/>
            <person name="Kraft A.R."/>
            <person name="Lagace R.E."/>
            <person name="LeBlanc D.J."/>
            <person name="Lee L.N."/>
            <person name="Lefkowitz E.J."/>
            <person name="Lu J."/>
            <person name="Matsushima P."/>
            <person name="McAhren S.M."/>
            <person name="McHenney M."/>
            <person name="McLeaster K."/>
            <person name="Mundy C.W."/>
            <person name="Nicas T.I."/>
            <person name="Norris F.H."/>
            <person name="O'Gara M."/>
            <person name="Peery R.B."/>
            <person name="Robertson G.T."/>
            <person name="Rockey P."/>
            <person name="Sun P.-M."/>
            <person name="Winkler M.E."/>
            <person name="Yang Y."/>
            <person name="Young-Bellido M."/>
            <person name="Zhao G."/>
            <person name="Zook C.A."/>
            <person name="Baltz R.H."/>
            <person name="Jaskunas S.R."/>
            <person name="Rosteck P.R. Jr."/>
            <person name="Skatrud P.L."/>
            <person name="Glass J.I."/>
        </authorList>
    </citation>
    <scope>NUCLEOTIDE SEQUENCE [LARGE SCALE GENOMIC DNA]</scope>
    <source>
        <strain>ATCC BAA-255 / R6</strain>
    </source>
</reference>
<accession>Q8DNM9</accession>
<protein>
    <recommendedName>
        <fullName evidence="1">Tryptophan synthase alpha chain</fullName>
        <ecNumber evidence="1">4.2.1.20</ecNumber>
    </recommendedName>
</protein>
<name>TRPA_STRR6</name>
<dbReference type="EC" id="4.2.1.20" evidence="1"/>
<dbReference type="EMBL" id="AE007317">
    <property type="protein sequence ID" value="AAL00434.1"/>
    <property type="molecule type" value="Genomic_DNA"/>
</dbReference>
<dbReference type="PIR" id="E98075">
    <property type="entry name" value="E98075"/>
</dbReference>
<dbReference type="RefSeq" id="NP_359223.1">
    <property type="nucleotide sequence ID" value="NC_003098.1"/>
</dbReference>
<dbReference type="RefSeq" id="WP_001127036.1">
    <property type="nucleotide sequence ID" value="NC_003098.1"/>
</dbReference>
<dbReference type="SMR" id="Q8DNM9"/>
<dbReference type="STRING" id="171101.spr1631"/>
<dbReference type="KEGG" id="spr:spr1631"/>
<dbReference type="PATRIC" id="fig|171101.6.peg.1760"/>
<dbReference type="eggNOG" id="COG0159">
    <property type="taxonomic scope" value="Bacteria"/>
</dbReference>
<dbReference type="HOGENOM" id="CLU_016734_0_0_9"/>
<dbReference type="UniPathway" id="UPA00035">
    <property type="reaction ID" value="UER00044"/>
</dbReference>
<dbReference type="Proteomes" id="UP000000586">
    <property type="component" value="Chromosome"/>
</dbReference>
<dbReference type="GO" id="GO:0005829">
    <property type="term" value="C:cytosol"/>
    <property type="evidence" value="ECO:0000318"/>
    <property type="project" value="GO_Central"/>
</dbReference>
<dbReference type="GO" id="GO:0004834">
    <property type="term" value="F:tryptophan synthase activity"/>
    <property type="evidence" value="ECO:0000318"/>
    <property type="project" value="GO_Central"/>
</dbReference>
<dbReference type="GO" id="GO:0000162">
    <property type="term" value="P:L-tryptophan biosynthetic process"/>
    <property type="evidence" value="ECO:0000318"/>
    <property type="project" value="GO_Central"/>
</dbReference>
<dbReference type="CDD" id="cd04724">
    <property type="entry name" value="Tryptophan_synthase_alpha"/>
    <property type="match status" value="1"/>
</dbReference>
<dbReference type="Gene3D" id="3.20.20.70">
    <property type="entry name" value="Aldolase class I"/>
    <property type="match status" value="1"/>
</dbReference>
<dbReference type="HAMAP" id="MF_00131">
    <property type="entry name" value="Trp_synth_alpha"/>
    <property type="match status" value="1"/>
</dbReference>
<dbReference type="InterPro" id="IPR013785">
    <property type="entry name" value="Aldolase_TIM"/>
</dbReference>
<dbReference type="InterPro" id="IPR011060">
    <property type="entry name" value="RibuloseP-bd_barrel"/>
</dbReference>
<dbReference type="InterPro" id="IPR018204">
    <property type="entry name" value="Trp_synthase_alpha_AS"/>
</dbReference>
<dbReference type="InterPro" id="IPR002028">
    <property type="entry name" value="Trp_synthase_suA"/>
</dbReference>
<dbReference type="NCBIfam" id="TIGR00262">
    <property type="entry name" value="trpA"/>
    <property type="match status" value="1"/>
</dbReference>
<dbReference type="PANTHER" id="PTHR43406:SF1">
    <property type="entry name" value="TRYPTOPHAN SYNTHASE ALPHA CHAIN, CHLOROPLASTIC"/>
    <property type="match status" value="1"/>
</dbReference>
<dbReference type="PANTHER" id="PTHR43406">
    <property type="entry name" value="TRYPTOPHAN SYNTHASE, ALPHA CHAIN"/>
    <property type="match status" value="1"/>
</dbReference>
<dbReference type="Pfam" id="PF00290">
    <property type="entry name" value="Trp_syntA"/>
    <property type="match status" value="1"/>
</dbReference>
<dbReference type="SUPFAM" id="SSF51366">
    <property type="entry name" value="Ribulose-phoshate binding barrel"/>
    <property type="match status" value="1"/>
</dbReference>
<dbReference type="PROSITE" id="PS00167">
    <property type="entry name" value="TRP_SYNTHASE_ALPHA"/>
    <property type="match status" value="1"/>
</dbReference>
<proteinExistence type="inferred from homology"/>
<comment type="function">
    <text evidence="1">The alpha subunit is responsible for the aldol cleavage of indoleglycerol phosphate to indole and glyceraldehyde 3-phosphate.</text>
</comment>
<comment type="catalytic activity">
    <reaction evidence="1">
        <text>(1S,2R)-1-C-(indol-3-yl)glycerol 3-phosphate + L-serine = D-glyceraldehyde 3-phosphate + L-tryptophan + H2O</text>
        <dbReference type="Rhea" id="RHEA:10532"/>
        <dbReference type="ChEBI" id="CHEBI:15377"/>
        <dbReference type="ChEBI" id="CHEBI:33384"/>
        <dbReference type="ChEBI" id="CHEBI:57912"/>
        <dbReference type="ChEBI" id="CHEBI:58866"/>
        <dbReference type="ChEBI" id="CHEBI:59776"/>
        <dbReference type="EC" id="4.2.1.20"/>
    </reaction>
</comment>
<comment type="pathway">
    <text evidence="1">Amino-acid biosynthesis; L-tryptophan biosynthesis; L-tryptophan from chorismate: step 5/5.</text>
</comment>
<comment type="subunit">
    <text evidence="1">Tetramer of two alpha and two beta chains.</text>
</comment>
<comment type="similarity">
    <text evidence="1">Belongs to the TrpA family.</text>
</comment>
<evidence type="ECO:0000255" key="1">
    <source>
        <dbReference type="HAMAP-Rule" id="MF_00131"/>
    </source>
</evidence>
<feature type="chain" id="PRO_0000098855" description="Tryptophan synthase alpha chain">
    <location>
        <begin position="1"/>
        <end position="258"/>
    </location>
</feature>
<feature type="active site" description="Proton acceptor" evidence="1">
    <location>
        <position position="52"/>
    </location>
</feature>
<feature type="active site" description="Proton acceptor" evidence="1">
    <location>
        <position position="63"/>
    </location>
</feature>
<keyword id="KW-0028">Amino-acid biosynthesis</keyword>
<keyword id="KW-0057">Aromatic amino acid biosynthesis</keyword>
<keyword id="KW-0456">Lyase</keyword>
<keyword id="KW-1185">Reference proteome</keyword>
<keyword id="KW-0822">Tryptophan biosynthesis</keyword>
<gene>
    <name evidence="1" type="primary">trpA</name>
    <name type="ordered locus">spr1631</name>
</gene>
<sequence length="258" mass="27742">MPKTLTEKLNAIKATGKGIFVPYIMAGDHEKGLDGLGETIHFLEDLGVSAIEVGIPFSDPVADGPVIEEAGLRSLAHGTSTQALVETLKTIETEIPLVIMTYFNPLFQYGVENFVKDLADTAVKGLIIPDLPHEHANFVEPFLADTDIALIPLVSLTTGIERQKELIEGAEGFVYAVAINGVTGKSGNYRADLDKHLAQLHQVADIPVLTGFGVSSQADLERFNAVSDGVIVGSKIVKALHQGEPIQDFIRQAVAYQK</sequence>
<organism>
    <name type="scientific">Streptococcus pneumoniae (strain ATCC BAA-255 / R6)</name>
    <dbReference type="NCBI Taxonomy" id="171101"/>
    <lineage>
        <taxon>Bacteria</taxon>
        <taxon>Bacillati</taxon>
        <taxon>Bacillota</taxon>
        <taxon>Bacilli</taxon>
        <taxon>Lactobacillales</taxon>
        <taxon>Streptococcaceae</taxon>
        <taxon>Streptococcus</taxon>
    </lineage>
</organism>